<organism>
    <name type="scientific">Arabidopsis thaliana</name>
    <name type="common">Mouse-ear cress</name>
    <dbReference type="NCBI Taxonomy" id="3702"/>
    <lineage>
        <taxon>Eukaryota</taxon>
        <taxon>Viridiplantae</taxon>
        <taxon>Streptophyta</taxon>
        <taxon>Embryophyta</taxon>
        <taxon>Tracheophyta</taxon>
        <taxon>Spermatophyta</taxon>
        <taxon>Magnoliopsida</taxon>
        <taxon>eudicotyledons</taxon>
        <taxon>Gunneridae</taxon>
        <taxon>Pentapetalae</taxon>
        <taxon>rosids</taxon>
        <taxon>malvids</taxon>
        <taxon>Brassicales</taxon>
        <taxon>Brassicaceae</taxon>
        <taxon>Camelineae</taxon>
        <taxon>Arabidopsis</taxon>
    </lineage>
</organism>
<name>TET7_ARATH</name>
<feature type="chain" id="PRO_0000421047" description="Tetraspanin-7">
    <location>
        <begin position="1"/>
        <end position="263"/>
    </location>
</feature>
<feature type="topological domain" description="Cytoplasmic" evidence="2">
    <location>
        <begin position="1"/>
        <end position="7"/>
    </location>
</feature>
<feature type="transmembrane region" description="Helical" evidence="2">
    <location>
        <begin position="8"/>
        <end position="28"/>
    </location>
</feature>
<feature type="topological domain" description="Extracellular" evidence="2">
    <location>
        <begin position="29"/>
        <end position="45"/>
    </location>
</feature>
<feature type="transmembrane region" description="Helical" evidence="2">
    <location>
        <begin position="46"/>
        <end position="66"/>
    </location>
</feature>
<feature type="topological domain" description="Cytoplasmic" evidence="2">
    <location>
        <begin position="67"/>
        <end position="75"/>
    </location>
</feature>
<feature type="transmembrane region" description="Helical" evidence="2">
    <location>
        <begin position="76"/>
        <end position="96"/>
    </location>
</feature>
<feature type="topological domain" description="Extracellular" evidence="2">
    <location>
        <begin position="97"/>
        <end position="234"/>
    </location>
</feature>
<feature type="transmembrane region" description="Helical" evidence="2">
    <location>
        <begin position="235"/>
        <end position="255"/>
    </location>
</feature>
<feature type="topological domain" description="Cytoplasmic" evidence="2">
    <location>
        <begin position="256"/>
        <end position="263"/>
    </location>
</feature>
<feature type="glycosylation site" description="N-linked (GlcNAc...) asparagine" evidence="2">
    <location>
        <position position="180"/>
    </location>
</feature>
<dbReference type="EMBL" id="AL035524">
    <property type="protein sequence ID" value="CAB36774.1"/>
    <property type="molecule type" value="Genomic_DNA"/>
</dbReference>
<dbReference type="EMBL" id="AL161572">
    <property type="protein sequence ID" value="CAB79607.1"/>
    <property type="molecule type" value="Genomic_DNA"/>
</dbReference>
<dbReference type="EMBL" id="CP002687">
    <property type="protein sequence ID" value="AEE85431.1"/>
    <property type="molecule type" value="Genomic_DNA"/>
</dbReference>
<dbReference type="EMBL" id="AY062774">
    <property type="protein sequence ID" value="AAL32852.1"/>
    <property type="molecule type" value="mRNA"/>
</dbReference>
<dbReference type="EMBL" id="AY081643">
    <property type="protein sequence ID" value="AAM10205.1"/>
    <property type="molecule type" value="mRNA"/>
</dbReference>
<dbReference type="EMBL" id="AY087947">
    <property type="protein sequence ID" value="AAM65495.1"/>
    <property type="molecule type" value="mRNA"/>
</dbReference>
<dbReference type="PIR" id="T02906">
    <property type="entry name" value="T02906"/>
</dbReference>
<dbReference type="RefSeq" id="NP_194534.1">
    <property type="nucleotide sequence ID" value="NM_118944.3"/>
</dbReference>
<dbReference type="FunCoup" id="Q9SUD4">
    <property type="interactions" value="277"/>
</dbReference>
<dbReference type="STRING" id="3702.Q9SUD4"/>
<dbReference type="GlyCosmos" id="Q9SUD4">
    <property type="glycosylation" value="1 site, No reported glycans"/>
</dbReference>
<dbReference type="GlyGen" id="Q9SUD4">
    <property type="glycosylation" value="1 site"/>
</dbReference>
<dbReference type="PaxDb" id="3702-AT4G28050.1"/>
<dbReference type="ProteomicsDB" id="232711"/>
<dbReference type="EnsemblPlants" id="AT4G28050.1">
    <property type="protein sequence ID" value="AT4G28050.1"/>
    <property type="gene ID" value="AT4G28050"/>
</dbReference>
<dbReference type="GeneID" id="828920"/>
<dbReference type="Gramene" id="AT4G28050.1">
    <property type="protein sequence ID" value="AT4G28050.1"/>
    <property type="gene ID" value="AT4G28050"/>
</dbReference>
<dbReference type="KEGG" id="ath:AT4G28050"/>
<dbReference type="Araport" id="AT4G28050"/>
<dbReference type="TAIR" id="AT4G28050">
    <property type="gene designation" value="TET7"/>
</dbReference>
<dbReference type="eggNOG" id="ENOG502QQQH">
    <property type="taxonomic scope" value="Eukaryota"/>
</dbReference>
<dbReference type="HOGENOM" id="CLU_066970_0_0_1"/>
<dbReference type="InParanoid" id="Q9SUD4"/>
<dbReference type="OMA" id="AKNWERI"/>
<dbReference type="OrthoDB" id="1892640at2759"/>
<dbReference type="PhylomeDB" id="Q9SUD4"/>
<dbReference type="PRO" id="PR:Q9SUD4"/>
<dbReference type="Proteomes" id="UP000006548">
    <property type="component" value="Chromosome 4"/>
</dbReference>
<dbReference type="ExpressionAtlas" id="Q9SUD4">
    <property type="expression patterns" value="baseline and differential"/>
</dbReference>
<dbReference type="GO" id="GO:0016020">
    <property type="term" value="C:membrane"/>
    <property type="evidence" value="ECO:0007669"/>
    <property type="project" value="UniProtKB-SubCell"/>
</dbReference>
<dbReference type="GO" id="GO:0009506">
    <property type="term" value="C:plasmodesma"/>
    <property type="evidence" value="ECO:0007005"/>
    <property type="project" value="TAIR"/>
</dbReference>
<dbReference type="GO" id="GO:0009734">
    <property type="term" value="P:auxin-activated signaling pathway"/>
    <property type="evidence" value="ECO:0007669"/>
    <property type="project" value="InterPro"/>
</dbReference>
<dbReference type="InterPro" id="IPR044991">
    <property type="entry name" value="TET_plant"/>
</dbReference>
<dbReference type="InterPro" id="IPR018499">
    <property type="entry name" value="Tetraspanin/Peripherin"/>
</dbReference>
<dbReference type="InterPro" id="IPR018503">
    <property type="entry name" value="Tetraspanin_CS"/>
</dbReference>
<dbReference type="PANTHER" id="PTHR32191">
    <property type="entry name" value="TETRASPANIN-8-RELATED"/>
    <property type="match status" value="1"/>
</dbReference>
<dbReference type="Pfam" id="PF00335">
    <property type="entry name" value="Tetraspanin"/>
    <property type="match status" value="1"/>
</dbReference>
<dbReference type="PRINTS" id="PR00259">
    <property type="entry name" value="TMFOUR"/>
</dbReference>
<dbReference type="PROSITE" id="PS00421">
    <property type="entry name" value="TM4_1"/>
    <property type="match status" value="1"/>
</dbReference>
<protein>
    <recommendedName>
        <fullName>Tetraspanin-7</fullName>
    </recommendedName>
</protein>
<gene>
    <name type="primary">TET7</name>
    <name type="ordered locus">At4g28050</name>
    <name type="ORF">T13J8.160</name>
</gene>
<keyword id="KW-0325">Glycoprotein</keyword>
<keyword id="KW-0472">Membrane</keyword>
<keyword id="KW-1185">Reference proteome</keyword>
<keyword id="KW-0812">Transmembrane</keyword>
<keyword id="KW-1133">Transmembrane helix</keyword>
<proteinExistence type="evidence at transcript level"/>
<accession>Q9SUD4</accession>
<evidence type="ECO:0000250" key="1"/>
<evidence type="ECO:0000255" key="2"/>
<evidence type="ECO:0000305" key="3"/>
<comment type="function">
    <text evidence="1">May be involved in the regulation of cell differentiation.</text>
</comment>
<comment type="subcellular location">
    <subcellularLocation>
        <location evidence="1">Membrane</location>
        <topology evidence="3">Multi-pass membrane protein</topology>
    </subcellularLocation>
</comment>
<comment type="similarity">
    <text evidence="3">Belongs to the tetraspanin (TM4SF) family.</text>
</comment>
<reference key="1">
    <citation type="journal article" date="1999" name="Nature">
        <title>Sequence and analysis of chromosome 4 of the plant Arabidopsis thaliana.</title>
        <authorList>
            <person name="Mayer K.F.X."/>
            <person name="Schueller C."/>
            <person name="Wambutt R."/>
            <person name="Murphy G."/>
            <person name="Volckaert G."/>
            <person name="Pohl T."/>
            <person name="Duesterhoeft A."/>
            <person name="Stiekema W."/>
            <person name="Entian K.-D."/>
            <person name="Terryn N."/>
            <person name="Harris B."/>
            <person name="Ansorge W."/>
            <person name="Brandt P."/>
            <person name="Grivell L.A."/>
            <person name="Rieger M."/>
            <person name="Weichselgartner M."/>
            <person name="de Simone V."/>
            <person name="Obermaier B."/>
            <person name="Mache R."/>
            <person name="Mueller M."/>
            <person name="Kreis M."/>
            <person name="Delseny M."/>
            <person name="Puigdomenech P."/>
            <person name="Watson M."/>
            <person name="Schmidtheini T."/>
            <person name="Reichert B."/>
            <person name="Portetelle D."/>
            <person name="Perez-Alonso M."/>
            <person name="Boutry M."/>
            <person name="Bancroft I."/>
            <person name="Vos P."/>
            <person name="Hoheisel J."/>
            <person name="Zimmermann W."/>
            <person name="Wedler H."/>
            <person name="Ridley P."/>
            <person name="Langham S.-A."/>
            <person name="McCullagh B."/>
            <person name="Bilham L."/>
            <person name="Robben J."/>
            <person name="van der Schueren J."/>
            <person name="Grymonprez B."/>
            <person name="Chuang Y.-J."/>
            <person name="Vandenbussche F."/>
            <person name="Braeken M."/>
            <person name="Weltjens I."/>
            <person name="Voet M."/>
            <person name="Bastiaens I."/>
            <person name="Aert R."/>
            <person name="Defoor E."/>
            <person name="Weitzenegger T."/>
            <person name="Bothe G."/>
            <person name="Ramsperger U."/>
            <person name="Hilbert H."/>
            <person name="Braun M."/>
            <person name="Holzer E."/>
            <person name="Brandt A."/>
            <person name="Peters S."/>
            <person name="van Staveren M."/>
            <person name="Dirkse W."/>
            <person name="Mooijman P."/>
            <person name="Klein Lankhorst R."/>
            <person name="Rose M."/>
            <person name="Hauf J."/>
            <person name="Koetter P."/>
            <person name="Berneiser S."/>
            <person name="Hempel S."/>
            <person name="Feldpausch M."/>
            <person name="Lamberth S."/>
            <person name="Van den Daele H."/>
            <person name="De Keyser A."/>
            <person name="Buysshaert C."/>
            <person name="Gielen J."/>
            <person name="Villarroel R."/>
            <person name="De Clercq R."/>
            <person name="van Montagu M."/>
            <person name="Rogers J."/>
            <person name="Cronin A."/>
            <person name="Quail M.A."/>
            <person name="Bray-Allen S."/>
            <person name="Clark L."/>
            <person name="Doggett J."/>
            <person name="Hall S."/>
            <person name="Kay M."/>
            <person name="Lennard N."/>
            <person name="McLay K."/>
            <person name="Mayes R."/>
            <person name="Pettett A."/>
            <person name="Rajandream M.A."/>
            <person name="Lyne M."/>
            <person name="Benes V."/>
            <person name="Rechmann S."/>
            <person name="Borkova D."/>
            <person name="Bloecker H."/>
            <person name="Scharfe M."/>
            <person name="Grimm M."/>
            <person name="Loehnert T.-H."/>
            <person name="Dose S."/>
            <person name="de Haan M."/>
            <person name="Maarse A.C."/>
            <person name="Schaefer M."/>
            <person name="Mueller-Auer S."/>
            <person name="Gabel C."/>
            <person name="Fuchs M."/>
            <person name="Fartmann B."/>
            <person name="Granderath K."/>
            <person name="Dauner D."/>
            <person name="Herzl A."/>
            <person name="Neumann S."/>
            <person name="Argiriou A."/>
            <person name="Vitale D."/>
            <person name="Liguori R."/>
            <person name="Piravandi E."/>
            <person name="Massenet O."/>
            <person name="Quigley F."/>
            <person name="Clabauld G."/>
            <person name="Muendlein A."/>
            <person name="Felber R."/>
            <person name="Schnabl S."/>
            <person name="Hiller R."/>
            <person name="Schmidt W."/>
            <person name="Lecharny A."/>
            <person name="Aubourg S."/>
            <person name="Chefdor F."/>
            <person name="Cooke R."/>
            <person name="Berger C."/>
            <person name="Monfort A."/>
            <person name="Casacuberta E."/>
            <person name="Gibbons T."/>
            <person name="Weber N."/>
            <person name="Vandenbol M."/>
            <person name="Bargues M."/>
            <person name="Terol J."/>
            <person name="Torres A."/>
            <person name="Perez-Perez A."/>
            <person name="Purnelle B."/>
            <person name="Bent E."/>
            <person name="Johnson S."/>
            <person name="Tacon D."/>
            <person name="Jesse T."/>
            <person name="Heijnen L."/>
            <person name="Schwarz S."/>
            <person name="Scholler P."/>
            <person name="Heber S."/>
            <person name="Francs P."/>
            <person name="Bielke C."/>
            <person name="Frishman D."/>
            <person name="Haase D."/>
            <person name="Lemcke K."/>
            <person name="Mewes H.-W."/>
            <person name="Stocker S."/>
            <person name="Zaccaria P."/>
            <person name="Bevan M."/>
            <person name="Wilson R.K."/>
            <person name="de la Bastide M."/>
            <person name="Habermann K."/>
            <person name="Parnell L."/>
            <person name="Dedhia N."/>
            <person name="Gnoj L."/>
            <person name="Schutz K."/>
            <person name="Huang E."/>
            <person name="Spiegel L."/>
            <person name="Sekhon M."/>
            <person name="Murray J."/>
            <person name="Sheet P."/>
            <person name="Cordes M."/>
            <person name="Abu-Threideh J."/>
            <person name="Stoneking T."/>
            <person name="Kalicki J."/>
            <person name="Graves T."/>
            <person name="Harmon G."/>
            <person name="Edwards J."/>
            <person name="Latreille P."/>
            <person name="Courtney L."/>
            <person name="Cloud J."/>
            <person name="Abbott A."/>
            <person name="Scott K."/>
            <person name="Johnson D."/>
            <person name="Minx P."/>
            <person name="Bentley D."/>
            <person name="Fulton B."/>
            <person name="Miller N."/>
            <person name="Greco T."/>
            <person name="Kemp K."/>
            <person name="Kramer J."/>
            <person name="Fulton L."/>
            <person name="Mardis E."/>
            <person name="Dante M."/>
            <person name="Pepin K."/>
            <person name="Hillier L.W."/>
            <person name="Nelson J."/>
            <person name="Spieth J."/>
            <person name="Ryan E."/>
            <person name="Andrews S."/>
            <person name="Geisel C."/>
            <person name="Layman D."/>
            <person name="Du H."/>
            <person name="Ali J."/>
            <person name="Berghoff A."/>
            <person name="Jones K."/>
            <person name="Drone K."/>
            <person name="Cotton M."/>
            <person name="Joshu C."/>
            <person name="Antonoiu B."/>
            <person name="Zidanic M."/>
            <person name="Strong C."/>
            <person name="Sun H."/>
            <person name="Lamar B."/>
            <person name="Yordan C."/>
            <person name="Ma P."/>
            <person name="Zhong J."/>
            <person name="Preston R."/>
            <person name="Vil D."/>
            <person name="Shekher M."/>
            <person name="Matero A."/>
            <person name="Shah R."/>
            <person name="Swaby I.K."/>
            <person name="O'Shaughnessy A."/>
            <person name="Rodriguez M."/>
            <person name="Hoffman J."/>
            <person name="Till S."/>
            <person name="Granat S."/>
            <person name="Shohdy N."/>
            <person name="Hasegawa A."/>
            <person name="Hameed A."/>
            <person name="Lodhi M."/>
            <person name="Johnson A."/>
            <person name="Chen E."/>
            <person name="Marra M.A."/>
            <person name="Martienssen R."/>
            <person name="McCombie W.R."/>
        </authorList>
    </citation>
    <scope>NUCLEOTIDE SEQUENCE [LARGE SCALE GENOMIC DNA]</scope>
    <source>
        <strain>cv. Columbia</strain>
    </source>
</reference>
<reference key="2">
    <citation type="journal article" date="2017" name="Plant J.">
        <title>Araport11: a complete reannotation of the Arabidopsis thaliana reference genome.</title>
        <authorList>
            <person name="Cheng C.Y."/>
            <person name="Krishnakumar V."/>
            <person name="Chan A.P."/>
            <person name="Thibaud-Nissen F."/>
            <person name="Schobel S."/>
            <person name="Town C.D."/>
        </authorList>
    </citation>
    <scope>GENOME REANNOTATION</scope>
    <source>
        <strain>cv. Columbia</strain>
    </source>
</reference>
<reference key="3">
    <citation type="journal article" date="2003" name="Science">
        <title>Empirical analysis of transcriptional activity in the Arabidopsis genome.</title>
        <authorList>
            <person name="Yamada K."/>
            <person name="Lim J."/>
            <person name="Dale J.M."/>
            <person name="Chen H."/>
            <person name="Shinn P."/>
            <person name="Palm C.J."/>
            <person name="Southwick A.M."/>
            <person name="Wu H.C."/>
            <person name="Kim C.J."/>
            <person name="Nguyen M."/>
            <person name="Pham P.K."/>
            <person name="Cheuk R.F."/>
            <person name="Karlin-Newmann G."/>
            <person name="Liu S.X."/>
            <person name="Lam B."/>
            <person name="Sakano H."/>
            <person name="Wu T."/>
            <person name="Yu G."/>
            <person name="Miranda M."/>
            <person name="Quach H.L."/>
            <person name="Tripp M."/>
            <person name="Chang C.H."/>
            <person name="Lee J.M."/>
            <person name="Toriumi M.J."/>
            <person name="Chan M.M."/>
            <person name="Tang C.C."/>
            <person name="Onodera C.S."/>
            <person name="Deng J.M."/>
            <person name="Akiyama K."/>
            <person name="Ansari Y."/>
            <person name="Arakawa T."/>
            <person name="Banh J."/>
            <person name="Banno F."/>
            <person name="Bowser L."/>
            <person name="Brooks S.Y."/>
            <person name="Carninci P."/>
            <person name="Chao Q."/>
            <person name="Choy N."/>
            <person name="Enju A."/>
            <person name="Goldsmith A.D."/>
            <person name="Gurjal M."/>
            <person name="Hansen N.F."/>
            <person name="Hayashizaki Y."/>
            <person name="Johnson-Hopson C."/>
            <person name="Hsuan V.W."/>
            <person name="Iida K."/>
            <person name="Karnes M."/>
            <person name="Khan S."/>
            <person name="Koesema E."/>
            <person name="Ishida J."/>
            <person name="Jiang P.X."/>
            <person name="Jones T."/>
            <person name="Kawai J."/>
            <person name="Kamiya A."/>
            <person name="Meyers C."/>
            <person name="Nakajima M."/>
            <person name="Narusaka M."/>
            <person name="Seki M."/>
            <person name="Sakurai T."/>
            <person name="Satou M."/>
            <person name="Tamse R."/>
            <person name="Vaysberg M."/>
            <person name="Wallender E.K."/>
            <person name="Wong C."/>
            <person name="Yamamura Y."/>
            <person name="Yuan S."/>
            <person name="Shinozaki K."/>
            <person name="Davis R.W."/>
            <person name="Theologis A."/>
            <person name="Ecker J.R."/>
        </authorList>
    </citation>
    <scope>NUCLEOTIDE SEQUENCE [LARGE SCALE MRNA]</scope>
    <source>
        <strain>cv. Columbia</strain>
    </source>
</reference>
<reference key="4">
    <citation type="submission" date="2002-03" db="EMBL/GenBank/DDBJ databases">
        <title>Full-length cDNA from Arabidopsis thaliana.</title>
        <authorList>
            <person name="Brover V.V."/>
            <person name="Troukhan M.E."/>
            <person name="Alexandrov N.A."/>
            <person name="Lu Y.-P."/>
            <person name="Flavell R.B."/>
            <person name="Feldmann K.A."/>
        </authorList>
    </citation>
    <scope>NUCLEOTIDE SEQUENCE [LARGE SCALE MRNA]</scope>
</reference>
<sequence>MVQCSNNLLGILNFFTFLLSIPILSAGIWLGKNAATECERFLDKPMVVLGIFLMFVSIAGLVGACCRVSCLLWLYLFAMFLLILLGFCFTIFAFAVTNRGAGEVISDRGYKEYHVADYSNWLQKRVNNAKNWERIRSCLMYSDVCSTYRTRYASINVEDFYKSNLNALQSGCCKPSNDCNFTYVNPTTWTKTPGPYKNEDCNVWDNKPGTLCYDCEACKAGLLDNIKNSWKKVAKVNIVFLIFLIIVYSVGCCAFRNNRKRSW</sequence>